<keyword id="KW-0119">Carbohydrate metabolism</keyword>
<keyword id="KW-0963">Cytoplasm</keyword>
<keyword id="KW-0413">Isomerase</keyword>
<keyword id="KW-0479">Metal-binding</keyword>
<keyword id="KW-1185">Reference proteome</keyword>
<keyword id="KW-0862">Zinc</keyword>
<name>GMHA_ECO24</name>
<dbReference type="EC" id="5.3.1.28" evidence="1"/>
<dbReference type="EMBL" id="CP000800">
    <property type="protein sequence ID" value="ABV19721.1"/>
    <property type="molecule type" value="Genomic_DNA"/>
</dbReference>
<dbReference type="SMR" id="A7ZHY1"/>
<dbReference type="KEGG" id="ecw:EcE24377A_0254"/>
<dbReference type="HOGENOM" id="CLU_080999_4_0_6"/>
<dbReference type="UniPathway" id="UPA00041">
    <property type="reaction ID" value="UER00436"/>
</dbReference>
<dbReference type="Proteomes" id="UP000001122">
    <property type="component" value="Chromosome"/>
</dbReference>
<dbReference type="GO" id="GO:0005737">
    <property type="term" value="C:cytoplasm"/>
    <property type="evidence" value="ECO:0007669"/>
    <property type="project" value="UniProtKB-SubCell"/>
</dbReference>
<dbReference type="GO" id="GO:0097367">
    <property type="term" value="F:carbohydrate derivative binding"/>
    <property type="evidence" value="ECO:0007669"/>
    <property type="project" value="InterPro"/>
</dbReference>
<dbReference type="GO" id="GO:0008968">
    <property type="term" value="F:D-sedoheptulose 7-phosphate isomerase activity"/>
    <property type="evidence" value="ECO:0007669"/>
    <property type="project" value="UniProtKB-UniRule"/>
</dbReference>
<dbReference type="GO" id="GO:0008270">
    <property type="term" value="F:zinc ion binding"/>
    <property type="evidence" value="ECO:0007669"/>
    <property type="project" value="UniProtKB-UniRule"/>
</dbReference>
<dbReference type="GO" id="GO:0005975">
    <property type="term" value="P:carbohydrate metabolic process"/>
    <property type="evidence" value="ECO:0007669"/>
    <property type="project" value="UniProtKB-UniRule"/>
</dbReference>
<dbReference type="GO" id="GO:2001061">
    <property type="term" value="P:D-glycero-D-manno-heptose 7-phosphate biosynthetic process"/>
    <property type="evidence" value="ECO:0007669"/>
    <property type="project" value="UniProtKB-UniPathway"/>
</dbReference>
<dbReference type="CDD" id="cd05006">
    <property type="entry name" value="SIS_GmhA"/>
    <property type="match status" value="1"/>
</dbReference>
<dbReference type="FunFam" id="3.40.50.10490:FF:000013">
    <property type="entry name" value="Phosphoheptose isomerase"/>
    <property type="match status" value="1"/>
</dbReference>
<dbReference type="Gene3D" id="3.40.50.10490">
    <property type="entry name" value="Glucose-6-phosphate isomerase like protein, domain 1"/>
    <property type="match status" value="1"/>
</dbReference>
<dbReference type="HAMAP" id="MF_00067">
    <property type="entry name" value="GmhA"/>
    <property type="match status" value="1"/>
</dbReference>
<dbReference type="InterPro" id="IPR035461">
    <property type="entry name" value="GmhA/DiaA"/>
</dbReference>
<dbReference type="InterPro" id="IPR004515">
    <property type="entry name" value="Phosphoheptose_Isoase"/>
</dbReference>
<dbReference type="InterPro" id="IPR001347">
    <property type="entry name" value="SIS_dom"/>
</dbReference>
<dbReference type="InterPro" id="IPR046348">
    <property type="entry name" value="SIS_dom_sf"/>
</dbReference>
<dbReference type="InterPro" id="IPR050099">
    <property type="entry name" value="SIS_GmhA/DiaA_subfam"/>
</dbReference>
<dbReference type="NCBIfam" id="TIGR00441">
    <property type="entry name" value="gmhA"/>
    <property type="match status" value="1"/>
</dbReference>
<dbReference type="NCBIfam" id="NF001628">
    <property type="entry name" value="PRK00414.1"/>
    <property type="match status" value="1"/>
</dbReference>
<dbReference type="PANTHER" id="PTHR30390:SF7">
    <property type="entry name" value="PHOSPHOHEPTOSE ISOMERASE"/>
    <property type="match status" value="1"/>
</dbReference>
<dbReference type="PANTHER" id="PTHR30390">
    <property type="entry name" value="SEDOHEPTULOSE 7-PHOSPHATE ISOMERASE / DNAA INITIATOR-ASSOCIATING FACTOR FOR REPLICATION INITIATION"/>
    <property type="match status" value="1"/>
</dbReference>
<dbReference type="Pfam" id="PF13580">
    <property type="entry name" value="SIS_2"/>
    <property type="match status" value="1"/>
</dbReference>
<dbReference type="SUPFAM" id="SSF53697">
    <property type="entry name" value="SIS domain"/>
    <property type="match status" value="1"/>
</dbReference>
<dbReference type="PROSITE" id="PS51464">
    <property type="entry name" value="SIS"/>
    <property type="match status" value="1"/>
</dbReference>
<evidence type="ECO:0000255" key="1">
    <source>
        <dbReference type="HAMAP-Rule" id="MF_00067"/>
    </source>
</evidence>
<sequence length="192" mass="20815">MYQDLIRNELNEAAETLANFLKDDANIHAIQRAAVLLADSFKAGGKVLSCGNGGSHCDAMHFAEELTGRYRENRPGYPAIAISDVSHISCVGNDFGFNDIFSRYVEAVGREGDVLLGISTSGNSANVIKAIAAAREKGMKVITLTGKDGGKMAGTADIEIRVPHFGYADRIQEIHIKVIHILIQLIEKEMVK</sequence>
<comment type="function">
    <text evidence="1">Catalyzes the isomerization of sedoheptulose 7-phosphate in D-glycero-D-manno-heptose 7-phosphate.</text>
</comment>
<comment type="catalytic activity">
    <reaction evidence="1">
        <text>2 D-sedoheptulose 7-phosphate = D-glycero-alpha-D-manno-heptose 7-phosphate + D-glycero-beta-D-manno-heptose 7-phosphate</text>
        <dbReference type="Rhea" id="RHEA:27489"/>
        <dbReference type="ChEBI" id="CHEBI:57483"/>
        <dbReference type="ChEBI" id="CHEBI:60203"/>
        <dbReference type="ChEBI" id="CHEBI:60204"/>
        <dbReference type="EC" id="5.3.1.28"/>
    </reaction>
</comment>
<comment type="cofactor">
    <cofactor evidence="1">
        <name>Zn(2+)</name>
        <dbReference type="ChEBI" id="CHEBI:29105"/>
    </cofactor>
    <text evidence="1">Binds 1 zinc ion per subunit.</text>
</comment>
<comment type="pathway">
    <text evidence="1">Carbohydrate biosynthesis; D-glycero-D-manno-heptose 7-phosphate biosynthesis; D-glycero-alpha-D-manno-heptose 7-phosphate and D-glycero-beta-D-manno-heptose 7-phosphate from sedoheptulose 7-phosphate: step 1/1.</text>
</comment>
<comment type="subunit">
    <text evidence="1">Homotetramer.</text>
</comment>
<comment type="subcellular location">
    <subcellularLocation>
        <location evidence="1">Cytoplasm</location>
    </subcellularLocation>
</comment>
<comment type="miscellaneous">
    <text evidence="1">The reaction produces a racemic mixture of D-glycero-alpha-D-manno-heptose 7-phosphate and D-glycero-beta-D-manno-heptose 7-phosphate.</text>
</comment>
<comment type="similarity">
    <text evidence="1">Belongs to the SIS family. GmhA subfamily.</text>
</comment>
<protein>
    <recommendedName>
        <fullName evidence="1">Phosphoheptose isomerase</fullName>
        <ecNumber evidence="1">5.3.1.28</ecNumber>
    </recommendedName>
    <alternativeName>
        <fullName evidence="1">Sedoheptulose 7-phosphate isomerase</fullName>
    </alternativeName>
</protein>
<organism>
    <name type="scientific">Escherichia coli O139:H28 (strain E24377A / ETEC)</name>
    <dbReference type="NCBI Taxonomy" id="331111"/>
    <lineage>
        <taxon>Bacteria</taxon>
        <taxon>Pseudomonadati</taxon>
        <taxon>Pseudomonadota</taxon>
        <taxon>Gammaproteobacteria</taxon>
        <taxon>Enterobacterales</taxon>
        <taxon>Enterobacteriaceae</taxon>
        <taxon>Escherichia</taxon>
    </lineage>
</organism>
<reference key="1">
    <citation type="journal article" date="2008" name="J. Bacteriol.">
        <title>The pangenome structure of Escherichia coli: comparative genomic analysis of E. coli commensal and pathogenic isolates.</title>
        <authorList>
            <person name="Rasko D.A."/>
            <person name="Rosovitz M.J."/>
            <person name="Myers G.S.A."/>
            <person name="Mongodin E.F."/>
            <person name="Fricke W.F."/>
            <person name="Gajer P."/>
            <person name="Crabtree J."/>
            <person name="Sebaihia M."/>
            <person name="Thomson N.R."/>
            <person name="Chaudhuri R."/>
            <person name="Henderson I.R."/>
            <person name="Sperandio V."/>
            <person name="Ravel J."/>
        </authorList>
    </citation>
    <scope>NUCLEOTIDE SEQUENCE [LARGE SCALE GENOMIC DNA]</scope>
    <source>
        <strain>E24377A / ETEC</strain>
    </source>
</reference>
<feature type="chain" id="PRO_1000057449" description="Phosphoheptose isomerase">
    <location>
        <begin position="1"/>
        <end position="192"/>
    </location>
</feature>
<feature type="domain" description="SIS" evidence="1">
    <location>
        <begin position="37"/>
        <end position="192"/>
    </location>
</feature>
<feature type="binding site" evidence="1">
    <location>
        <begin position="52"/>
        <end position="54"/>
    </location>
    <ligand>
        <name>substrate</name>
    </ligand>
</feature>
<feature type="binding site" evidence="1">
    <location>
        <position position="61"/>
    </location>
    <ligand>
        <name>Zn(2+)</name>
        <dbReference type="ChEBI" id="CHEBI:29105"/>
    </ligand>
</feature>
<feature type="binding site" evidence="1">
    <location>
        <position position="65"/>
    </location>
    <ligand>
        <name>substrate</name>
    </ligand>
</feature>
<feature type="binding site" evidence="1">
    <location>
        <position position="65"/>
    </location>
    <ligand>
        <name>Zn(2+)</name>
        <dbReference type="ChEBI" id="CHEBI:29105"/>
    </ligand>
</feature>
<feature type="binding site" evidence="1">
    <location>
        <begin position="93"/>
        <end position="94"/>
    </location>
    <ligand>
        <name>substrate</name>
    </ligand>
</feature>
<feature type="binding site" evidence="1">
    <location>
        <begin position="119"/>
        <end position="121"/>
    </location>
    <ligand>
        <name>substrate</name>
    </ligand>
</feature>
<feature type="binding site" evidence="1">
    <location>
        <position position="124"/>
    </location>
    <ligand>
        <name>substrate</name>
    </ligand>
</feature>
<feature type="binding site" evidence="1">
    <location>
        <position position="172"/>
    </location>
    <ligand>
        <name>substrate</name>
    </ligand>
</feature>
<feature type="binding site" evidence="1">
    <location>
        <position position="172"/>
    </location>
    <ligand>
        <name>Zn(2+)</name>
        <dbReference type="ChEBI" id="CHEBI:29105"/>
    </ligand>
</feature>
<feature type="binding site" evidence="1">
    <location>
        <position position="180"/>
    </location>
    <ligand>
        <name>Zn(2+)</name>
        <dbReference type="ChEBI" id="CHEBI:29105"/>
    </ligand>
</feature>
<accession>A7ZHY1</accession>
<gene>
    <name evidence="1" type="primary">gmhA</name>
    <name type="ordered locus">EcE24377A_0254</name>
</gene>
<proteinExistence type="inferred from homology"/>